<organism>
    <name type="scientific">Rhodopirellula baltica (strain DSM 10527 / NCIMB 13988 / SH1)</name>
    <dbReference type="NCBI Taxonomy" id="243090"/>
    <lineage>
        <taxon>Bacteria</taxon>
        <taxon>Pseudomonadati</taxon>
        <taxon>Planctomycetota</taxon>
        <taxon>Planctomycetia</taxon>
        <taxon>Pirellulales</taxon>
        <taxon>Pirellulaceae</taxon>
        <taxon>Rhodopirellula</taxon>
    </lineage>
</organism>
<accession>Q7UG04</accession>
<keyword id="KW-0012">Acyltransferase</keyword>
<keyword id="KW-0028">Amino-acid biosynthesis</keyword>
<keyword id="KW-0963">Cytoplasm</keyword>
<keyword id="KW-0486">Methionine biosynthesis</keyword>
<keyword id="KW-1185">Reference proteome</keyword>
<keyword id="KW-0808">Transferase</keyword>
<feature type="chain" id="PRO_0000440306" description="Bifunctional methionine biosynthesis protein MetXA/MetW">
    <location>
        <begin position="1"/>
        <end position="623"/>
    </location>
</feature>
<feature type="domain" description="AB hydrolase-1" evidence="1">
    <location>
        <begin position="77"/>
        <end position="385"/>
    </location>
</feature>
<feature type="region of interest" description="Disordered" evidence="2">
    <location>
        <begin position="1"/>
        <end position="30"/>
    </location>
</feature>
<feature type="region of interest" description="MetW" evidence="5">
    <location>
        <begin position="417"/>
        <end position="619"/>
    </location>
</feature>
<feature type="compositionally biased region" description="Polar residues" evidence="2">
    <location>
        <begin position="1"/>
        <end position="17"/>
    </location>
</feature>
<feature type="active site" description="Nucleophile" evidence="1">
    <location>
        <position position="183"/>
    </location>
</feature>
<feature type="active site" evidence="1">
    <location>
        <position position="348"/>
    </location>
</feature>
<feature type="active site" evidence="1">
    <location>
        <position position="381"/>
    </location>
</feature>
<feature type="binding site" evidence="1">
    <location>
        <position position="253"/>
    </location>
    <ligand>
        <name>substrate</name>
    </ligand>
</feature>
<feature type="binding site" evidence="1">
    <location>
        <position position="382"/>
    </location>
    <ligand>
        <name>substrate</name>
    </ligand>
</feature>
<reference key="1">
    <citation type="journal article" date="2003" name="Proc. Natl. Acad. Sci. U.S.A.">
        <title>Complete genome sequence of the marine planctomycete Pirellula sp. strain 1.</title>
        <authorList>
            <person name="Gloeckner F.O."/>
            <person name="Kube M."/>
            <person name="Bauer M."/>
            <person name="Teeling H."/>
            <person name="Lombardot T."/>
            <person name="Ludwig W."/>
            <person name="Gade D."/>
            <person name="Beck A."/>
            <person name="Borzym K."/>
            <person name="Heitmann K."/>
            <person name="Rabus R."/>
            <person name="Schlesner H."/>
            <person name="Amann R."/>
            <person name="Reinhardt R."/>
        </authorList>
    </citation>
    <scope>NUCLEOTIDE SEQUENCE [LARGE SCALE GENOMIC DNA]</scope>
    <source>
        <strain>DSM 10527 / NCIMB 13988 / SH1</strain>
    </source>
</reference>
<reference key="2">
    <citation type="journal article" date="2017" name="Nat. Chem. Biol.">
        <title>Parallel evolution of non-homologous isofunctional enzymes in methionine biosynthesis.</title>
        <authorList>
            <person name="Bastard K."/>
            <person name="Perret A."/>
            <person name="Mariage A."/>
            <person name="Bessonnet T."/>
            <person name="Pinet-Turpault A."/>
            <person name="Petit J.L."/>
            <person name="Darii E."/>
            <person name="Bazire P."/>
            <person name="Vergne-Vaxelaire C."/>
            <person name="Brewee C."/>
            <person name="Debard A."/>
            <person name="Pellouin V."/>
            <person name="Besnard-Gonnet M."/>
            <person name="Artiguenave F."/>
            <person name="Medigue C."/>
            <person name="Vallenet D."/>
            <person name="Danchin A."/>
            <person name="Zaparucha A."/>
            <person name="Weissenbach J."/>
            <person name="Salanoubat M."/>
            <person name="de Berardinis V."/>
        </authorList>
    </citation>
    <scope>FUNCTION</scope>
    <scope>CATALYTIC ACTIVITY</scope>
</reference>
<name>MTXAW_RHOBA</name>
<protein>
    <recommendedName>
        <fullName evidence="5">Bifunctional methionine biosynthesis protein MetXA/MetW</fullName>
    </recommendedName>
    <domain>
        <recommendedName>
            <fullName evidence="5">Homoserine O-acetyltransferase</fullName>
            <shortName evidence="4">HAT</shortName>
            <ecNumber evidence="3">2.3.1.31</ecNumber>
        </recommendedName>
        <alternativeName>
            <fullName evidence="5">Homoserine transacetylase</fullName>
            <shortName evidence="5">HTA</shortName>
        </alternativeName>
    </domain>
    <domain>
        <recommendedName>
            <fullName evidence="5">Protein MetW</fullName>
        </recommendedName>
    </domain>
</protein>
<sequence>MTSGRSTRVTMFESQASMGEPSNEDLSSTDDVRTDAPLAYAKYVTFDQSLPLERGGELPEIRCCYETWGTLNDDGSNAVLVCHAVSGDSHAARHDEDDQPGWWDGLIGPGLPIDTDRLFVVCPNVLGGCRGSTGPGDADPTSPDGKPYGANFPRITIGDIVEAQKLLADHLGIRQWRAVVGGSLGGHQVLQWINRYPDAAKTCVAIATSPRLNSQALGFDVIARNAIQTDPHYAGGQYYDKDQRPDTGLAIARMLGHITYLSVEAMEAKFDPDRHDPRQIASQFEQRFSIGSYLAHQGQKFTTRFDANSYVTLSMAMDLFDLGGTRLKLMETFDEATCDFLLISFSSDWLFPPAQSREIVNALTALDKRVTYAEITTNAGHDAFLIAKDIATYGPLIRERLRDTETHPAVPSDITLNVDEESILEIIPAGSSVLDLGCGNGQLLAAIRDRHRTPGPPTTEHRLMGVEVAQENLLATAMRGIDVIDYDLNHGLPAFIDDQFDYVILNATLQAVENVVELLNEMLRVGRHAIISFPNFAYRQLRDHYVTHGRSPKAPGEFDFDWHNTPNRRFPTIADVRDLLGQLNVVIDEEVFWDVDQGQRIEPDNDPNLNADTAVIAFHRENR</sequence>
<comment type="function">
    <text evidence="1 3">Transfers an acetyl group from acetyl-CoA to L-homoserine, forming acetyl-L-homoserine.</text>
</comment>
<comment type="catalytic activity">
    <reaction evidence="1 3">
        <text>L-homoserine + acetyl-CoA = O-acetyl-L-homoserine + CoA</text>
        <dbReference type="Rhea" id="RHEA:13701"/>
        <dbReference type="ChEBI" id="CHEBI:57287"/>
        <dbReference type="ChEBI" id="CHEBI:57288"/>
        <dbReference type="ChEBI" id="CHEBI:57476"/>
        <dbReference type="ChEBI" id="CHEBI:57716"/>
        <dbReference type="EC" id="2.3.1.31"/>
    </reaction>
</comment>
<comment type="pathway">
    <text evidence="1">Amino-acid biosynthesis; L-methionine biosynthesis via de novo pathway; O-acetyl-L-homoserine from L-homoserine: step 1/1.</text>
</comment>
<comment type="subunit">
    <text evidence="1">Homodimer.</text>
</comment>
<comment type="subcellular location">
    <subcellularLocation>
        <location evidence="1">Cytoplasm</location>
    </subcellularLocation>
</comment>
<comment type="similarity">
    <text evidence="5">In the N-terminal section; belongs to the AB hydrolase superfamily. MetX family.</text>
</comment>
<comment type="similarity">
    <text evidence="5">In the C-terminal section; belongs to the MetW family.</text>
</comment>
<gene>
    <name evidence="1 4" type="primary">metXA</name>
    <name evidence="6" type="synonym">metX</name>
    <name evidence="6" type="ordered locus">RB8222</name>
</gene>
<evidence type="ECO:0000255" key="1">
    <source>
        <dbReference type="HAMAP-Rule" id="MF_00296"/>
    </source>
</evidence>
<evidence type="ECO:0000256" key="2">
    <source>
        <dbReference type="SAM" id="MobiDB-lite"/>
    </source>
</evidence>
<evidence type="ECO:0000269" key="3">
    <source>
    </source>
</evidence>
<evidence type="ECO:0000303" key="4">
    <source>
    </source>
</evidence>
<evidence type="ECO:0000305" key="5"/>
<evidence type="ECO:0000312" key="6">
    <source>
        <dbReference type="EMBL" id="CAD78525.1"/>
    </source>
</evidence>
<proteinExistence type="evidence at protein level"/>
<dbReference type="EC" id="2.3.1.31" evidence="3"/>
<dbReference type="EMBL" id="BX294147">
    <property type="protein sequence ID" value="CAD78525.1"/>
    <property type="molecule type" value="Genomic_DNA"/>
</dbReference>
<dbReference type="RefSeq" id="NP_868247.1">
    <property type="nucleotide sequence ID" value="NC_005027.1"/>
</dbReference>
<dbReference type="SMR" id="Q7UG04"/>
<dbReference type="STRING" id="243090.RB8222"/>
<dbReference type="ESTHER" id="rhoba-q7ug04">
    <property type="family name" value="Homoserine_transacetylase"/>
</dbReference>
<dbReference type="EnsemblBacteria" id="CAD78525">
    <property type="protein sequence ID" value="CAD78525"/>
    <property type="gene ID" value="RB8222"/>
</dbReference>
<dbReference type="KEGG" id="rba:RB8222"/>
<dbReference type="PATRIC" id="fig|243090.15.peg.3962"/>
<dbReference type="eggNOG" id="COG2021">
    <property type="taxonomic scope" value="Bacteria"/>
</dbReference>
<dbReference type="eggNOG" id="COG2813">
    <property type="taxonomic scope" value="Bacteria"/>
</dbReference>
<dbReference type="HOGENOM" id="CLU_028760_6_0_0"/>
<dbReference type="InParanoid" id="Q7UG04"/>
<dbReference type="OrthoDB" id="9800754at2"/>
<dbReference type="UniPathway" id="UPA00051">
    <property type="reaction ID" value="UER00074"/>
</dbReference>
<dbReference type="Proteomes" id="UP000001025">
    <property type="component" value="Chromosome"/>
</dbReference>
<dbReference type="GO" id="GO:0005737">
    <property type="term" value="C:cytoplasm"/>
    <property type="evidence" value="ECO:0007669"/>
    <property type="project" value="UniProtKB-SubCell"/>
</dbReference>
<dbReference type="GO" id="GO:0004414">
    <property type="term" value="F:homoserine O-acetyltransferase activity"/>
    <property type="evidence" value="ECO:0000318"/>
    <property type="project" value="GO_Central"/>
</dbReference>
<dbReference type="GO" id="GO:0009086">
    <property type="term" value="P:methionine biosynthetic process"/>
    <property type="evidence" value="ECO:0000318"/>
    <property type="project" value="GO_Central"/>
</dbReference>
<dbReference type="CDD" id="cd02440">
    <property type="entry name" value="AdoMet_MTases"/>
    <property type="match status" value="1"/>
</dbReference>
<dbReference type="FunFam" id="3.40.50.150:FF:001161">
    <property type="match status" value="1"/>
</dbReference>
<dbReference type="FunFam" id="1.10.1740.110:FF:000001">
    <property type="entry name" value="Homoserine O-acetyltransferase"/>
    <property type="match status" value="1"/>
</dbReference>
<dbReference type="Gene3D" id="1.10.1740.110">
    <property type="match status" value="1"/>
</dbReference>
<dbReference type="Gene3D" id="3.40.50.1820">
    <property type="entry name" value="alpha/beta hydrolase"/>
    <property type="match status" value="1"/>
</dbReference>
<dbReference type="Gene3D" id="3.40.50.150">
    <property type="entry name" value="Vaccinia Virus protein VP39"/>
    <property type="match status" value="1"/>
</dbReference>
<dbReference type="HAMAP" id="MF_00296">
    <property type="entry name" value="MetX_acyltransf"/>
    <property type="match status" value="1"/>
</dbReference>
<dbReference type="InterPro" id="IPR000073">
    <property type="entry name" value="AB_hydrolase_1"/>
</dbReference>
<dbReference type="InterPro" id="IPR029058">
    <property type="entry name" value="AB_hydrolase_fold"/>
</dbReference>
<dbReference type="InterPro" id="IPR008220">
    <property type="entry name" value="HAT_MetX-like"/>
</dbReference>
<dbReference type="InterPro" id="IPR010743">
    <property type="entry name" value="Methionine_synth_MetW"/>
</dbReference>
<dbReference type="InterPro" id="IPR029063">
    <property type="entry name" value="SAM-dependent_MTases_sf"/>
</dbReference>
<dbReference type="NCBIfam" id="TIGR01392">
    <property type="entry name" value="homoserO_Ac_trn"/>
    <property type="match status" value="1"/>
</dbReference>
<dbReference type="NCBIfam" id="TIGR02081">
    <property type="entry name" value="metW"/>
    <property type="match status" value="1"/>
</dbReference>
<dbReference type="NCBIfam" id="NF001209">
    <property type="entry name" value="PRK00175.1"/>
    <property type="match status" value="1"/>
</dbReference>
<dbReference type="PANTHER" id="PTHR32268">
    <property type="entry name" value="HOMOSERINE O-ACETYLTRANSFERASE"/>
    <property type="match status" value="1"/>
</dbReference>
<dbReference type="PANTHER" id="PTHR32268:SF11">
    <property type="entry name" value="HOMOSERINE O-ACETYLTRANSFERASE"/>
    <property type="match status" value="1"/>
</dbReference>
<dbReference type="Pfam" id="PF00561">
    <property type="entry name" value="Abhydrolase_1"/>
    <property type="match status" value="1"/>
</dbReference>
<dbReference type="Pfam" id="PF07021">
    <property type="entry name" value="MetW"/>
    <property type="match status" value="1"/>
</dbReference>
<dbReference type="SUPFAM" id="SSF53474">
    <property type="entry name" value="alpha/beta-Hydrolases"/>
    <property type="match status" value="1"/>
</dbReference>
<dbReference type="SUPFAM" id="SSF53335">
    <property type="entry name" value="S-adenosyl-L-methionine-dependent methyltransferases"/>
    <property type="match status" value="1"/>
</dbReference>